<keyword id="KW-0687">Ribonucleoprotein</keyword>
<keyword id="KW-0689">Ribosomal protein</keyword>
<keyword id="KW-0694">RNA-binding</keyword>
<keyword id="KW-0699">rRNA-binding</keyword>
<feature type="chain" id="PRO_1000141601" description="Large ribosomal subunit protein uL2">
    <location>
        <begin position="1"/>
        <end position="276"/>
    </location>
</feature>
<feature type="region of interest" description="Disordered" evidence="2">
    <location>
        <begin position="37"/>
        <end position="59"/>
    </location>
</feature>
<feature type="region of interest" description="Disordered" evidence="2">
    <location>
        <begin position="225"/>
        <end position="276"/>
    </location>
</feature>
<feature type="compositionally biased region" description="Polar residues" evidence="2">
    <location>
        <begin position="39"/>
        <end position="49"/>
    </location>
</feature>
<feature type="compositionally biased region" description="Basic residues" evidence="2">
    <location>
        <begin position="50"/>
        <end position="59"/>
    </location>
</feature>
<name>RL2_RALPJ</name>
<sequence length="276" mass="30156">MALVKTKPTSPGRRSMVKVVNPDLHKGAPHAPLLEKQIQKSGRNNNGHITTRHKGGGHKHHYRVVDFKRNDKDGIPAKIERLEYDPNRSANIALVLFADGERRYIIAPKGAVVGQAIANGSEAPIKAGNNLPIRNIPVGTTIHCVEILPGKGAQVARSAGTSAVLLAREGIYAQVRLRSGEVRRVHIECRATIGEVGNEEHSLRQIGKAGATRWRGIRPTVRGVVMNPVDHPHGGGEGKTAAGRDPVSPWGTPTKGYRTRRNKRTDSMIVQRRHKR</sequence>
<reference key="1">
    <citation type="submission" date="2008-05" db="EMBL/GenBank/DDBJ databases">
        <title>Complete sequence of chromosome 1 of Ralstonia pickettii 12J.</title>
        <authorList>
            <person name="Lucas S."/>
            <person name="Copeland A."/>
            <person name="Lapidus A."/>
            <person name="Glavina del Rio T."/>
            <person name="Dalin E."/>
            <person name="Tice H."/>
            <person name="Bruce D."/>
            <person name="Goodwin L."/>
            <person name="Pitluck S."/>
            <person name="Meincke L."/>
            <person name="Brettin T."/>
            <person name="Detter J.C."/>
            <person name="Han C."/>
            <person name="Kuske C.R."/>
            <person name="Schmutz J."/>
            <person name="Larimer F."/>
            <person name="Land M."/>
            <person name="Hauser L."/>
            <person name="Kyrpides N."/>
            <person name="Mikhailova N."/>
            <person name="Marsh T."/>
            <person name="Richardson P."/>
        </authorList>
    </citation>
    <scope>NUCLEOTIDE SEQUENCE [LARGE SCALE GENOMIC DNA]</scope>
    <source>
        <strain>12J</strain>
    </source>
</reference>
<dbReference type="EMBL" id="CP001068">
    <property type="protein sequence ID" value="ACD28416.1"/>
    <property type="molecule type" value="Genomic_DNA"/>
</dbReference>
<dbReference type="SMR" id="B2UEL6"/>
<dbReference type="STRING" id="402626.Rpic_3294"/>
<dbReference type="KEGG" id="rpi:Rpic_3294"/>
<dbReference type="eggNOG" id="COG0090">
    <property type="taxonomic scope" value="Bacteria"/>
</dbReference>
<dbReference type="HOGENOM" id="CLU_036235_2_1_4"/>
<dbReference type="GO" id="GO:0015934">
    <property type="term" value="C:large ribosomal subunit"/>
    <property type="evidence" value="ECO:0007669"/>
    <property type="project" value="InterPro"/>
</dbReference>
<dbReference type="GO" id="GO:0019843">
    <property type="term" value="F:rRNA binding"/>
    <property type="evidence" value="ECO:0007669"/>
    <property type="project" value="UniProtKB-UniRule"/>
</dbReference>
<dbReference type="GO" id="GO:0003735">
    <property type="term" value="F:structural constituent of ribosome"/>
    <property type="evidence" value="ECO:0007669"/>
    <property type="project" value="InterPro"/>
</dbReference>
<dbReference type="GO" id="GO:0016740">
    <property type="term" value="F:transferase activity"/>
    <property type="evidence" value="ECO:0007669"/>
    <property type="project" value="InterPro"/>
</dbReference>
<dbReference type="GO" id="GO:0002181">
    <property type="term" value="P:cytoplasmic translation"/>
    <property type="evidence" value="ECO:0007669"/>
    <property type="project" value="TreeGrafter"/>
</dbReference>
<dbReference type="FunFam" id="2.30.30.30:FF:000001">
    <property type="entry name" value="50S ribosomal protein L2"/>
    <property type="match status" value="1"/>
</dbReference>
<dbReference type="FunFam" id="2.40.50.140:FF:000003">
    <property type="entry name" value="50S ribosomal protein L2"/>
    <property type="match status" value="1"/>
</dbReference>
<dbReference type="FunFam" id="4.10.950.10:FF:000001">
    <property type="entry name" value="50S ribosomal protein L2"/>
    <property type="match status" value="1"/>
</dbReference>
<dbReference type="Gene3D" id="2.30.30.30">
    <property type="match status" value="1"/>
</dbReference>
<dbReference type="Gene3D" id="2.40.50.140">
    <property type="entry name" value="Nucleic acid-binding proteins"/>
    <property type="match status" value="1"/>
</dbReference>
<dbReference type="Gene3D" id="4.10.950.10">
    <property type="entry name" value="Ribosomal protein L2, domain 3"/>
    <property type="match status" value="1"/>
</dbReference>
<dbReference type="HAMAP" id="MF_01320_B">
    <property type="entry name" value="Ribosomal_uL2_B"/>
    <property type="match status" value="1"/>
</dbReference>
<dbReference type="InterPro" id="IPR012340">
    <property type="entry name" value="NA-bd_OB-fold"/>
</dbReference>
<dbReference type="InterPro" id="IPR014722">
    <property type="entry name" value="Rib_uL2_dom2"/>
</dbReference>
<dbReference type="InterPro" id="IPR002171">
    <property type="entry name" value="Ribosomal_uL2"/>
</dbReference>
<dbReference type="InterPro" id="IPR005880">
    <property type="entry name" value="Ribosomal_uL2_bac/org-type"/>
</dbReference>
<dbReference type="InterPro" id="IPR022669">
    <property type="entry name" value="Ribosomal_uL2_C"/>
</dbReference>
<dbReference type="InterPro" id="IPR022671">
    <property type="entry name" value="Ribosomal_uL2_CS"/>
</dbReference>
<dbReference type="InterPro" id="IPR014726">
    <property type="entry name" value="Ribosomal_uL2_dom3"/>
</dbReference>
<dbReference type="InterPro" id="IPR022666">
    <property type="entry name" value="Ribosomal_uL2_RNA-bd_dom"/>
</dbReference>
<dbReference type="InterPro" id="IPR008991">
    <property type="entry name" value="Translation_prot_SH3-like_sf"/>
</dbReference>
<dbReference type="NCBIfam" id="TIGR01171">
    <property type="entry name" value="rplB_bact"/>
    <property type="match status" value="1"/>
</dbReference>
<dbReference type="PANTHER" id="PTHR13691:SF5">
    <property type="entry name" value="LARGE RIBOSOMAL SUBUNIT PROTEIN UL2M"/>
    <property type="match status" value="1"/>
</dbReference>
<dbReference type="PANTHER" id="PTHR13691">
    <property type="entry name" value="RIBOSOMAL PROTEIN L2"/>
    <property type="match status" value="1"/>
</dbReference>
<dbReference type="Pfam" id="PF00181">
    <property type="entry name" value="Ribosomal_L2"/>
    <property type="match status" value="1"/>
</dbReference>
<dbReference type="Pfam" id="PF03947">
    <property type="entry name" value="Ribosomal_L2_C"/>
    <property type="match status" value="1"/>
</dbReference>
<dbReference type="PIRSF" id="PIRSF002158">
    <property type="entry name" value="Ribosomal_L2"/>
    <property type="match status" value="1"/>
</dbReference>
<dbReference type="SMART" id="SM01383">
    <property type="entry name" value="Ribosomal_L2"/>
    <property type="match status" value="1"/>
</dbReference>
<dbReference type="SMART" id="SM01382">
    <property type="entry name" value="Ribosomal_L2_C"/>
    <property type="match status" value="1"/>
</dbReference>
<dbReference type="SUPFAM" id="SSF50249">
    <property type="entry name" value="Nucleic acid-binding proteins"/>
    <property type="match status" value="1"/>
</dbReference>
<dbReference type="SUPFAM" id="SSF50104">
    <property type="entry name" value="Translation proteins SH3-like domain"/>
    <property type="match status" value="1"/>
</dbReference>
<dbReference type="PROSITE" id="PS00467">
    <property type="entry name" value="RIBOSOMAL_L2"/>
    <property type="match status" value="1"/>
</dbReference>
<gene>
    <name evidence="1" type="primary">rplB</name>
    <name type="ordered locus">Rpic_3294</name>
</gene>
<protein>
    <recommendedName>
        <fullName evidence="1">Large ribosomal subunit protein uL2</fullName>
    </recommendedName>
    <alternativeName>
        <fullName evidence="3">50S ribosomal protein L2</fullName>
    </alternativeName>
</protein>
<proteinExistence type="inferred from homology"/>
<comment type="function">
    <text evidence="1">One of the primary rRNA binding proteins. Required for association of the 30S and 50S subunits to form the 70S ribosome, for tRNA binding and peptide bond formation. It has been suggested to have peptidyltransferase activity; this is somewhat controversial. Makes several contacts with the 16S rRNA in the 70S ribosome.</text>
</comment>
<comment type="subunit">
    <text evidence="1">Part of the 50S ribosomal subunit. Forms a bridge to the 30S subunit in the 70S ribosome.</text>
</comment>
<comment type="similarity">
    <text evidence="1">Belongs to the universal ribosomal protein uL2 family.</text>
</comment>
<evidence type="ECO:0000255" key="1">
    <source>
        <dbReference type="HAMAP-Rule" id="MF_01320"/>
    </source>
</evidence>
<evidence type="ECO:0000256" key="2">
    <source>
        <dbReference type="SAM" id="MobiDB-lite"/>
    </source>
</evidence>
<evidence type="ECO:0000305" key="3"/>
<accession>B2UEL6</accession>
<organism>
    <name type="scientific">Ralstonia pickettii (strain 12J)</name>
    <dbReference type="NCBI Taxonomy" id="402626"/>
    <lineage>
        <taxon>Bacteria</taxon>
        <taxon>Pseudomonadati</taxon>
        <taxon>Pseudomonadota</taxon>
        <taxon>Betaproteobacteria</taxon>
        <taxon>Burkholderiales</taxon>
        <taxon>Burkholderiaceae</taxon>
        <taxon>Ralstonia</taxon>
    </lineage>
</organism>